<keyword id="KW-0808">Transferase</keyword>
<evidence type="ECO:0000250" key="1"/>
<evidence type="ECO:0000255" key="2">
    <source>
        <dbReference type="HAMAP-Rule" id="MF_00742"/>
    </source>
</evidence>
<feature type="chain" id="PRO_1000133194" description="Formyl-CoA:oxalate CoA-transferase">
    <location>
        <begin position="1"/>
        <end position="416"/>
    </location>
</feature>
<feature type="active site" description="Nucleophile" evidence="2">
    <location>
        <position position="169"/>
    </location>
</feature>
<feature type="binding site" evidence="1">
    <location>
        <begin position="17"/>
        <end position="18"/>
    </location>
    <ligand>
        <name>CoA</name>
        <dbReference type="ChEBI" id="CHEBI:57287"/>
    </ligand>
</feature>
<feature type="binding site" evidence="2">
    <location>
        <position position="38"/>
    </location>
    <ligand>
        <name>CoA</name>
        <dbReference type="ChEBI" id="CHEBI:57287"/>
    </ligand>
</feature>
<feature type="binding site" evidence="1">
    <location>
        <begin position="72"/>
        <end position="75"/>
    </location>
    <ligand>
        <name>CoA</name>
        <dbReference type="ChEBI" id="CHEBI:57287"/>
    </ligand>
</feature>
<feature type="binding site" evidence="1">
    <location>
        <begin position="96"/>
        <end position="98"/>
    </location>
    <ligand>
        <name>CoA</name>
        <dbReference type="ChEBI" id="CHEBI:57287"/>
    </ligand>
</feature>
<feature type="binding site" evidence="2">
    <location>
        <position position="104"/>
    </location>
    <ligand>
        <name>CoA</name>
        <dbReference type="ChEBI" id="CHEBI:57287"/>
    </ligand>
</feature>
<feature type="binding site" evidence="1">
    <location>
        <begin position="137"/>
        <end position="140"/>
    </location>
    <ligand>
        <name>CoA</name>
        <dbReference type="ChEBI" id="CHEBI:57287"/>
    </ligand>
</feature>
<feature type="binding site" evidence="1">
    <location>
        <begin position="248"/>
        <end position="250"/>
    </location>
    <ligand>
        <name>substrate</name>
    </ligand>
</feature>
<feature type="binding site" evidence="1">
    <location>
        <begin position="273"/>
        <end position="275"/>
    </location>
    <ligand>
        <name>CoA</name>
        <dbReference type="ChEBI" id="CHEBI:57287"/>
    </ligand>
</feature>
<protein>
    <recommendedName>
        <fullName>Formyl-CoA:oxalate CoA-transferase</fullName>
        <shortName>FCOCT</shortName>
        <ecNumber evidence="2">2.8.3.16</ecNumber>
    </recommendedName>
    <alternativeName>
        <fullName evidence="2">Formyl-coenzyme A transferase</fullName>
        <shortName evidence="2">Formyl-CoA transferase</shortName>
    </alternativeName>
</protein>
<dbReference type="EC" id="2.8.3.16" evidence="2"/>
<dbReference type="EMBL" id="CP001164">
    <property type="protein sequence ID" value="ACI37823.1"/>
    <property type="molecule type" value="Genomic_DNA"/>
</dbReference>
<dbReference type="RefSeq" id="WP_000106757.1">
    <property type="nucleotide sequence ID" value="NC_011353.1"/>
</dbReference>
<dbReference type="SMR" id="B5YYX4"/>
<dbReference type="KEGG" id="ecf:ECH74115_3606"/>
<dbReference type="HOGENOM" id="CLU_033975_2_1_6"/>
<dbReference type="UniPathway" id="UPA00540">
    <property type="reaction ID" value="UER00598"/>
</dbReference>
<dbReference type="GO" id="GO:0033608">
    <property type="term" value="F:formyl-CoA transferase activity"/>
    <property type="evidence" value="ECO:0007669"/>
    <property type="project" value="UniProtKB-EC"/>
</dbReference>
<dbReference type="GO" id="GO:0033611">
    <property type="term" value="P:oxalate catabolic process"/>
    <property type="evidence" value="ECO:0007669"/>
    <property type="project" value="UniProtKB-UniRule"/>
</dbReference>
<dbReference type="Gene3D" id="3.40.50.10540">
    <property type="entry name" value="Crotonobetainyl-coa:carnitine coa-transferase, domain 1"/>
    <property type="match status" value="1"/>
</dbReference>
<dbReference type="Gene3D" id="3.30.1540.10">
    <property type="entry name" value="formyl-coa transferase, domain 3"/>
    <property type="match status" value="1"/>
</dbReference>
<dbReference type="HAMAP" id="MF_00742">
    <property type="entry name" value="Formyl_CoA_transfer"/>
    <property type="match status" value="1"/>
</dbReference>
<dbReference type="InterPro" id="IPR050483">
    <property type="entry name" value="CoA-transferase_III_domain"/>
</dbReference>
<dbReference type="InterPro" id="IPR003673">
    <property type="entry name" value="CoA-Trfase_fam_III"/>
</dbReference>
<dbReference type="InterPro" id="IPR044855">
    <property type="entry name" value="CoA-Trfase_III_dom3_sf"/>
</dbReference>
<dbReference type="InterPro" id="IPR023606">
    <property type="entry name" value="CoA-Trfase_III_dom_1_sf"/>
</dbReference>
<dbReference type="InterPro" id="IPR017659">
    <property type="entry name" value="Formyl_CoA_transfer"/>
</dbReference>
<dbReference type="NCBIfam" id="TIGR03253">
    <property type="entry name" value="oxalate_frc"/>
    <property type="match status" value="1"/>
</dbReference>
<dbReference type="NCBIfam" id="NF003809">
    <property type="entry name" value="PRK05398.1"/>
    <property type="match status" value="1"/>
</dbReference>
<dbReference type="PANTHER" id="PTHR48207">
    <property type="entry name" value="SUCCINATE--HYDROXYMETHYLGLUTARATE COA-TRANSFERASE"/>
    <property type="match status" value="1"/>
</dbReference>
<dbReference type="PANTHER" id="PTHR48207:SF3">
    <property type="entry name" value="SUCCINATE--HYDROXYMETHYLGLUTARATE COA-TRANSFERASE"/>
    <property type="match status" value="1"/>
</dbReference>
<dbReference type="Pfam" id="PF02515">
    <property type="entry name" value="CoA_transf_3"/>
    <property type="match status" value="1"/>
</dbReference>
<dbReference type="SUPFAM" id="SSF89796">
    <property type="entry name" value="CoA-transferase family III (CaiB/BaiF)"/>
    <property type="match status" value="1"/>
</dbReference>
<accession>B5YYX4</accession>
<comment type="function">
    <text evidence="1">Involved in the catabolism of oxalate and in the adapatation to low pH via the induction of the oxalate-dependent acid tolerance response (ATR). Catalyzes the transfer of the CoA moiety from formyl-CoA to oxalate (By similarity).</text>
</comment>
<comment type="catalytic activity">
    <reaction evidence="2">
        <text>formyl-CoA + oxalate = oxalyl-CoA + formate</text>
        <dbReference type="Rhea" id="RHEA:16545"/>
        <dbReference type="ChEBI" id="CHEBI:15740"/>
        <dbReference type="ChEBI" id="CHEBI:30623"/>
        <dbReference type="ChEBI" id="CHEBI:57376"/>
        <dbReference type="ChEBI" id="CHEBI:57388"/>
        <dbReference type="EC" id="2.8.3.16"/>
    </reaction>
</comment>
<comment type="pathway">
    <text evidence="2">Metabolic intermediate degradation; oxalate degradation; CO(2) and formate from oxalate: step 1/2.</text>
</comment>
<comment type="subunit">
    <text evidence="2">Homodimer.</text>
</comment>
<comment type="similarity">
    <text evidence="2">Belongs to the CoA-transferase III family. Frc subfamily.</text>
</comment>
<name>FCTA_ECO5E</name>
<reference key="1">
    <citation type="journal article" date="2011" name="Proc. Natl. Acad. Sci. U.S.A.">
        <title>Genomic anatomy of Escherichia coli O157:H7 outbreaks.</title>
        <authorList>
            <person name="Eppinger M."/>
            <person name="Mammel M.K."/>
            <person name="Leclerc J.E."/>
            <person name="Ravel J."/>
            <person name="Cebula T.A."/>
        </authorList>
    </citation>
    <scope>NUCLEOTIDE SEQUENCE [LARGE SCALE GENOMIC DNA]</scope>
    <source>
        <strain>EC4115 / EHEC</strain>
    </source>
</reference>
<organism>
    <name type="scientific">Escherichia coli O157:H7 (strain EC4115 / EHEC)</name>
    <dbReference type="NCBI Taxonomy" id="444450"/>
    <lineage>
        <taxon>Bacteria</taxon>
        <taxon>Pseudomonadati</taxon>
        <taxon>Pseudomonadota</taxon>
        <taxon>Gammaproteobacteria</taxon>
        <taxon>Enterobacterales</taxon>
        <taxon>Enterobacteriaceae</taxon>
        <taxon>Escherichia</taxon>
    </lineage>
</organism>
<sequence length="416" mass="45814">MSTPLQGIKVLDFTGVQSGPSCTQMLAWFGADVIKIERPGVGDVTRHQLRDIPDIDALYFTMLNSNKRSIELNTKTAEGKEVMEKLIREADILVENFHPGAIDHMGFTWEHIQEINPRLIFGSIKGFDECSPYVNVKAYENVAQAAGGAASTTGFWDGPPLVSAAALGDSNTGMHLLIGLLAALLHREKTGRGQRVTMSMQDAVLNLCRVKLRDQQRLDKLGYLEEYPQYPNGTFGDAVPRGGNAGGGGQPGWILKCKGWETDPNAYIYFTIQEQNWENTCKAIGKPDWITDPAYSTAHARQPHIFDIFAEIEKYTVTIDKHEAVAYLTQFDIPCAPVLSMKEISLDPSLRQSGSVVEVEQPLRGKYLTVGCPMKFSAFTPDIKAAPLLGEHTAAVLQELGYSDDEIAAMKQNHAI</sequence>
<proteinExistence type="inferred from homology"/>
<gene>
    <name evidence="2" type="primary">frc</name>
    <name type="ordered locus">ECH74115_3606</name>
</gene>